<sequence length="292" mass="30166">MVAFVWLPRNGVSWTVVLPLKNLTRAKTRLDRPDRSRLALAMALDTVMAVLESETDLVGAVMIVTNDRTADHALSTLLNSHYIGADQPNLSPAARSARLVVIPDEPDRGLNPALVHGAALASARWPTRAVAALSADLPALRPPELHQALSEASQHRRAVLADATGTGTVLLTASAGATLQPAFGPHSHATHRRSGAVDLTGTLGGSVPGLRRDVDTLADLAQARDLGVGRATRAALTAGYHSPLVAEDSGGSGGESGTSAESGLSVPPGIVGGTQRRIVSDASGPGRAKKYP</sequence>
<evidence type="ECO:0000255" key="1">
    <source>
        <dbReference type="HAMAP-Rule" id="MF_02114"/>
    </source>
</evidence>
<evidence type="ECO:0000256" key="2">
    <source>
        <dbReference type="SAM" id="MobiDB-lite"/>
    </source>
</evidence>
<proteinExistence type="inferred from homology"/>
<comment type="function">
    <text evidence="1">Guanylyltransferase that catalyzes the activation of phosphoenolpyruvate (PEP) as enolpyruvoyl-2-diphospho-5'-guanosine, via the condensation of PEP with GTP. It is involved in the biosynthesis of coenzyme F420, a hydride carrier cofactor.</text>
</comment>
<comment type="catalytic activity">
    <reaction evidence="1">
        <text>phosphoenolpyruvate + GTP + H(+) = enolpyruvoyl-2-diphospho-5'-guanosine + diphosphate</text>
        <dbReference type="Rhea" id="RHEA:30519"/>
        <dbReference type="ChEBI" id="CHEBI:15378"/>
        <dbReference type="ChEBI" id="CHEBI:33019"/>
        <dbReference type="ChEBI" id="CHEBI:37565"/>
        <dbReference type="ChEBI" id="CHEBI:58702"/>
        <dbReference type="ChEBI" id="CHEBI:143701"/>
        <dbReference type="EC" id="2.7.7.105"/>
    </reaction>
</comment>
<comment type="pathway">
    <text evidence="1">Cofactor biosynthesis; coenzyme F420 biosynthesis.</text>
</comment>
<comment type="similarity">
    <text evidence="1">Belongs to the CofC family.</text>
</comment>
<protein>
    <recommendedName>
        <fullName evidence="1">Phosphoenolpyruvate guanylyltransferase</fullName>
        <shortName evidence="1">PEP guanylyltransferase</shortName>
        <ecNumber evidence="1">2.7.7.105</ecNumber>
    </recommendedName>
</protein>
<reference key="1">
    <citation type="journal article" date="2007" name="Genome Res.">
        <title>Genome characteristics of facultatively symbiotic Frankia sp. strains reflect host range and host plant biogeography.</title>
        <authorList>
            <person name="Normand P."/>
            <person name="Lapierre P."/>
            <person name="Tisa L.S."/>
            <person name="Gogarten J.P."/>
            <person name="Alloisio N."/>
            <person name="Bagnarol E."/>
            <person name="Bassi C.A."/>
            <person name="Berry A.M."/>
            <person name="Bickhart D.M."/>
            <person name="Choisne N."/>
            <person name="Couloux A."/>
            <person name="Cournoyer B."/>
            <person name="Cruveiller S."/>
            <person name="Daubin V."/>
            <person name="Demange N."/>
            <person name="Francino M.P."/>
            <person name="Goltsman E."/>
            <person name="Huang Y."/>
            <person name="Kopp O.R."/>
            <person name="Labarre L."/>
            <person name="Lapidus A."/>
            <person name="Lavire C."/>
            <person name="Marechal J."/>
            <person name="Martinez M."/>
            <person name="Mastronunzio J.E."/>
            <person name="Mullin B.C."/>
            <person name="Niemann J."/>
            <person name="Pujic P."/>
            <person name="Rawnsley T."/>
            <person name="Rouy Z."/>
            <person name="Schenowitz C."/>
            <person name="Sellstedt A."/>
            <person name="Tavares F."/>
            <person name="Tomkins J.P."/>
            <person name="Vallenet D."/>
            <person name="Valverde C."/>
            <person name="Wall L.G."/>
            <person name="Wang Y."/>
            <person name="Medigue C."/>
            <person name="Benson D.R."/>
        </authorList>
    </citation>
    <scope>NUCLEOTIDE SEQUENCE [LARGE SCALE GENOMIC DNA]</scope>
    <source>
        <strain>DSM 45818 / CECT 9043 / HFP020203 / CcI3</strain>
    </source>
</reference>
<organism>
    <name type="scientific">Frankia casuarinae (strain DSM 45818 / CECT 9043 / HFP020203 / CcI3)</name>
    <dbReference type="NCBI Taxonomy" id="106370"/>
    <lineage>
        <taxon>Bacteria</taxon>
        <taxon>Bacillati</taxon>
        <taxon>Actinomycetota</taxon>
        <taxon>Actinomycetes</taxon>
        <taxon>Frankiales</taxon>
        <taxon>Frankiaceae</taxon>
        <taxon>Frankia</taxon>
    </lineage>
</organism>
<gene>
    <name evidence="1" type="primary">fbiD</name>
    <name type="ordered locus">Francci3_3616</name>
</gene>
<keyword id="KW-0342">GTP-binding</keyword>
<keyword id="KW-0547">Nucleotide-binding</keyword>
<keyword id="KW-0548">Nucleotidyltransferase</keyword>
<keyword id="KW-1185">Reference proteome</keyword>
<keyword id="KW-0808">Transferase</keyword>
<accession>Q2J6X4</accession>
<name>FBID_FRACC</name>
<dbReference type="EC" id="2.7.7.105" evidence="1"/>
<dbReference type="EMBL" id="CP000249">
    <property type="protein sequence ID" value="ABD12968.1"/>
    <property type="molecule type" value="Genomic_DNA"/>
</dbReference>
<dbReference type="SMR" id="Q2J6X4"/>
<dbReference type="STRING" id="106370.Francci3_3616"/>
<dbReference type="KEGG" id="fra:Francci3_3616"/>
<dbReference type="eggNOG" id="COG1920">
    <property type="taxonomic scope" value="Bacteria"/>
</dbReference>
<dbReference type="HOGENOM" id="CLU_076569_0_0_11"/>
<dbReference type="UniPathway" id="UPA00071"/>
<dbReference type="Proteomes" id="UP000001937">
    <property type="component" value="Chromosome"/>
</dbReference>
<dbReference type="GO" id="GO:0005525">
    <property type="term" value="F:GTP binding"/>
    <property type="evidence" value="ECO:0007669"/>
    <property type="project" value="UniProtKB-KW"/>
</dbReference>
<dbReference type="GO" id="GO:0043814">
    <property type="term" value="F:phospholactate guanylyltransferase activity"/>
    <property type="evidence" value="ECO:0007669"/>
    <property type="project" value="InterPro"/>
</dbReference>
<dbReference type="GO" id="GO:0052645">
    <property type="term" value="P:F420-0 metabolic process"/>
    <property type="evidence" value="ECO:0007669"/>
    <property type="project" value="UniProtKB-UniRule"/>
</dbReference>
<dbReference type="Gene3D" id="3.90.550.10">
    <property type="entry name" value="Spore Coat Polysaccharide Biosynthesis Protein SpsA, Chain A"/>
    <property type="match status" value="1"/>
</dbReference>
<dbReference type="HAMAP" id="MF_02114">
    <property type="entry name" value="CofC"/>
    <property type="match status" value="1"/>
</dbReference>
<dbReference type="InterPro" id="IPR002835">
    <property type="entry name" value="CofC"/>
</dbReference>
<dbReference type="InterPro" id="IPR029044">
    <property type="entry name" value="Nucleotide-diphossugar_trans"/>
</dbReference>
<dbReference type="NCBIfam" id="TIGR03552">
    <property type="entry name" value="F420_cofC"/>
    <property type="match status" value="1"/>
</dbReference>
<dbReference type="PANTHER" id="PTHR40392">
    <property type="entry name" value="2-PHOSPHO-L-LACTATE GUANYLYLTRANSFERASE"/>
    <property type="match status" value="1"/>
</dbReference>
<dbReference type="PANTHER" id="PTHR40392:SF1">
    <property type="entry name" value="2-PHOSPHO-L-LACTATE GUANYLYLTRANSFERASE"/>
    <property type="match status" value="1"/>
</dbReference>
<dbReference type="SUPFAM" id="SSF53448">
    <property type="entry name" value="Nucleotide-diphospho-sugar transferases"/>
    <property type="match status" value="1"/>
</dbReference>
<feature type="chain" id="PRO_0000398684" description="Phosphoenolpyruvate guanylyltransferase">
    <location>
        <begin position="1"/>
        <end position="292"/>
    </location>
</feature>
<feature type="region of interest" description="Disordered" evidence="2">
    <location>
        <begin position="243"/>
        <end position="292"/>
    </location>
</feature>
<feature type="binding site" evidence="1">
    <location>
        <position position="168"/>
    </location>
    <ligand>
        <name>phosphoenolpyruvate</name>
        <dbReference type="ChEBI" id="CHEBI:58702"/>
    </ligand>
</feature>
<feature type="binding site" evidence="1">
    <location>
        <position position="184"/>
    </location>
    <ligand>
        <name>phosphoenolpyruvate</name>
        <dbReference type="ChEBI" id="CHEBI:58702"/>
    </ligand>
</feature>
<feature type="binding site" evidence="1">
    <location>
        <position position="187"/>
    </location>
    <ligand>
        <name>phosphoenolpyruvate</name>
        <dbReference type="ChEBI" id="CHEBI:58702"/>
    </ligand>
</feature>